<evidence type="ECO:0000250" key="1">
    <source>
        <dbReference type="UniProtKB" id="Q9JMH2"/>
    </source>
</evidence>
<evidence type="ECO:0000255" key="2"/>
<evidence type="ECO:0000255" key="3">
    <source>
        <dbReference type="PROSITE-ProRule" id="PRU00114"/>
    </source>
</evidence>
<evidence type="ECO:0000255" key="4">
    <source>
        <dbReference type="PROSITE-ProRule" id="PRU00316"/>
    </source>
</evidence>
<evidence type="ECO:0000269" key="5">
    <source>
    </source>
</evidence>
<evidence type="ECO:0000305" key="6"/>
<protein>
    <recommendedName>
        <fullName>Leucine-rich repeat, immunoglobulin-like domain and transmembrane domain-containing protein 1</fullName>
    </recommendedName>
    <alternativeName>
        <fullName>Leucine-rich repeat-containing protein 21</fullName>
    </alternativeName>
    <alternativeName>
        <fullName>Photoreceptor-associated LRR superfamily protein</fullName>
    </alternativeName>
    <alternativeName>
        <fullName>Retina-specific protein PAL</fullName>
    </alternativeName>
</protein>
<dbReference type="EMBL" id="AK044631">
    <property type="protein sequence ID" value="BAC32010.1"/>
    <property type="status" value="ALT_INIT"/>
    <property type="molecule type" value="mRNA"/>
</dbReference>
<dbReference type="EMBL" id="BC032270">
    <property type="protein sequence ID" value="AAH32270.2"/>
    <property type="molecule type" value="mRNA"/>
</dbReference>
<dbReference type="CCDS" id="CCDS26950.2"/>
<dbReference type="RefSeq" id="NP_666357.2">
    <property type="nucleotide sequence ID" value="NM_146245.2"/>
</dbReference>
<dbReference type="SMR" id="Q8K099"/>
<dbReference type="FunCoup" id="Q8K099">
    <property type="interactions" value="182"/>
</dbReference>
<dbReference type="STRING" id="10090.ENSMUSP00000113964"/>
<dbReference type="GlyCosmos" id="Q8K099">
    <property type="glycosylation" value="3 sites, No reported glycans"/>
</dbReference>
<dbReference type="GlyGen" id="Q8K099">
    <property type="glycosylation" value="3 sites"/>
</dbReference>
<dbReference type="iPTMnet" id="Q8K099"/>
<dbReference type="PhosphoSitePlus" id="Q8K099"/>
<dbReference type="jPOST" id="Q8K099"/>
<dbReference type="PaxDb" id="10090-ENSMUSP00000113964"/>
<dbReference type="PeptideAtlas" id="Q8K099"/>
<dbReference type="ProteomicsDB" id="292042"/>
<dbReference type="Antibodypedia" id="48882">
    <property type="antibodies" value="60 antibodies from 12 providers"/>
</dbReference>
<dbReference type="DNASU" id="239037"/>
<dbReference type="Ensembl" id="ENSMUST00000120052.2">
    <property type="protein sequence ID" value="ENSMUSP00000113964.2"/>
    <property type="gene ID" value="ENSMUSG00000041044.10"/>
</dbReference>
<dbReference type="GeneID" id="239037"/>
<dbReference type="KEGG" id="mmu:239037"/>
<dbReference type="UCSC" id="uc007tbr.2">
    <property type="organism name" value="mouse"/>
</dbReference>
<dbReference type="AGR" id="MGI:2385320"/>
<dbReference type="CTD" id="26103"/>
<dbReference type="MGI" id="MGI:2385320">
    <property type="gene designation" value="Lrit1"/>
</dbReference>
<dbReference type="VEuPathDB" id="HostDB:ENSMUSG00000041044"/>
<dbReference type="eggNOG" id="KOG0619">
    <property type="taxonomic scope" value="Eukaryota"/>
</dbReference>
<dbReference type="eggNOG" id="KOG3510">
    <property type="taxonomic scope" value="Eukaryota"/>
</dbReference>
<dbReference type="GeneTree" id="ENSGT00940000156033"/>
<dbReference type="HOGENOM" id="CLU_019650_0_0_1"/>
<dbReference type="InParanoid" id="Q8K099"/>
<dbReference type="OMA" id="IVCVCVK"/>
<dbReference type="OrthoDB" id="9229163at2759"/>
<dbReference type="PhylomeDB" id="Q8K099"/>
<dbReference type="TreeFam" id="TF330861"/>
<dbReference type="BioGRID-ORCS" id="239037">
    <property type="hits" value="1 hit in 77 CRISPR screens"/>
</dbReference>
<dbReference type="PRO" id="PR:Q8K099"/>
<dbReference type="Proteomes" id="UP000000589">
    <property type="component" value="Chromosome 14"/>
</dbReference>
<dbReference type="RNAct" id="Q8K099">
    <property type="molecule type" value="protein"/>
</dbReference>
<dbReference type="Bgee" id="ENSMUSG00000041044">
    <property type="expression patterns" value="Expressed in retinal neural layer and 10 other cell types or tissues"/>
</dbReference>
<dbReference type="GO" id="GO:0030425">
    <property type="term" value="C:dendrite"/>
    <property type="evidence" value="ECO:0007669"/>
    <property type="project" value="UniProtKB-SubCell"/>
</dbReference>
<dbReference type="GO" id="GO:0005789">
    <property type="term" value="C:endoplasmic reticulum membrane"/>
    <property type="evidence" value="ECO:0007669"/>
    <property type="project" value="UniProtKB-SubCell"/>
</dbReference>
<dbReference type="GO" id="GO:0045202">
    <property type="term" value="C:synapse"/>
    <property type="evidence" value="ECO:0000314"/>
    <property type="project" value="MGI"/>
</dbReference>
<dbReference type="GO" id="GO:0043083">
    <property type="term" value="C:synaptic cleft"/>
    <property type="evidence" value="ECO:0000314"/>
    <property type="project" value="MGI"/>
</dbReference>
<dbReference type="GO" id="GO:0007602">
    <property type="term" value="P:phototransduction"/>
    <property type="evidence" value="ECO:0000315"/>
    <property type="project" value="MGI"/>
</dbReference>
<dbReference type="GO" id="GO:0009416">
    <property type="term" value="P:response to light stimulus"/>
    <property type="evidence" value="ECO:0000315"/>
    <property type="project" value="MGI"/>
</dbReference>
<dbReference type="GO" id="GO:0099536">
    <property type="term" value="P:synaptic signaling"/>
    <property type="evidence" value="ECO:0000315"/>
    <property type="project" value="MGI"/>
</dbReference>
<dbReference type="GO" id="GO:0007601">
    <property type="term" value="P:visual perception"/>
    <property type="evidence" value="ECO:0000315"/>
    <property type="project" value="MGI"/>
</dbReference>
<dbReference type="CDD" id="cd00063">
    <property type="entry name" value="FN3"/>
    <property type="match status" value="1"/>
</dbReference>
<dbReference type="FunFam" id="3.80.10.10:FF:000058">
    <property type="entry name" value="immunoglobulin superfamily containing leucine-rich repeat protein 2"/>
    <property type="match status" value="1"/>
</dbReference>
<dbReference type="FunFam" id="2.60.40.10:FF:000744">
    <property type="entry name" value="Leucine rich repeat, Ig-like and transmembrane domains 1"/>
    <property type="match status" value="1"/>
</dbReference>
<dbReference type="FunFam" id="2.60.40.10:FF:000928">
    <property type="entry name" value="Leucine rich repeat, Ig-like and transmembrane domains 1"/>
    <property type="match status" value="1"/>
</dbReference>
<dbReference type="Gene3D" id="2.60.40.10">
    <property type="entry name" value="Immunoglobulins"/>
    <property type="match status" value="2"/>
</dbReference>
<dbReference type="Gene3D" id="3.80.10.10">
    <property type="entry name" value="Ribonuclease Inhibitor"/>
    <property type="match status" value="1"/>
</dbReference>
<dbReference type="InterPro" id="IPR000483">
    <property type="entry name" value="Cys-rich_flank_reg_C"/>
</dbReference>
<dbReference type="InterPro" id="IPR003961">
    <property type="entry name" value="FN3_dom"/>
</dbReference>
<dbReference type="InterPro" id="IPR036116">
    <property type="entry name" value="FN3_sf"/>
</dbReference>
<dbReference type="InterPro" id="IPR007110">
    <property type="entry name" value="Ig-like_dom"/>
</dbReference>
<dbReference type="InterPro" id="IPR036179">
    <property type="entry name" value="Ig-like_dom_sf"/>
</dbReference>
<dbReference type="InterPro" id="IPR013783">
    <property type="entry name" value="Ig-like_fold"/>
</dbReference>
<dbReference type="InterPro" id="IPR013098">
    <property type="entry name" value="Ig_I-set"/>
</dbReference>
<dbReference type="InterPro" id="IPR003599">
    <property type="entry name" value="Ig_sub"/>
</dbReference>
<dbReference type="InterPro" id="IPR003598">
    <property type="entry name" value="Ig_sub2"/>
</dbReference>
<dbReference type="InterPro" id="IPR001611">
    <property type="entry name" value="Leu-rich_rpt"/>
</dbReference>
<dbReference type="InterPro" id="IPR003591">
    <property type="entry name" value="Leu-rich_rpt_typical-subtyp"/>
</dbReference>
<dbReference type="InterPro" id="IPR050467">
    <property type="entry name" value="LRFN"/>
</dbReference>
<dbReference type="InterPro" id="IPR032675">
    <property type="entry name" value="LRR_dom_sf"/>
</dbReference>
<dbReference type="InterPro" id="IPR000372">
    <property type="entry name" value="LRRNT"/>
</dbReference>
<dbReference type="PANTHER" id="PTHR45842:SF9">
    <property type="entry name" value="LEUCINE-RICH REPEAT, IMMUNOGLOBULIN-LIKE DOMAIN AND TRANSMEMBRANE DOMAIN-CONTAINING PROTEIN 1"/>
    <property type="match status" value="1"/>
</dbReference>
<dbReference type="PANTHER" id="PTHR45842">
    <property type="entry name" value="SYNAPTIC ADHESION-LIKE MOLECULE SALM"/>
    <property type="match status" value="1"/>
</dbReference>
<dbReference type="Pfam" id="PF00041">
    <property type="entry name" value="fn3"/>
    <property type="match status" value="1"/>
</dbReference>
<dbReference type="Pfam" id="PF07679">
    <property type="entry name" value="I-set"/>
    <property type="match status" value="1"/>
</dbReference>
<dbReference type="Pfam" id="PF13855">
    <property type="entry name" value="LRR_8"/>
    <property type="match status" value="1"/>
</dbReference>
<dbReference type="PRINTS" id="PR00019">
    <property type="entry name" value="LEURICHRPT"/>
</dbReference>
<dbReference type="SMART" id="SM00409">
    <property type="entry name" value="IG"/>
    <property type="match status" value="1"/>
</dbReference>
<dbReference type="SMART" id="SM00408">
    <property type="entry name" value="IGc2"/>
    <property type="match status" value="1"/>
</dbReference>
<dbReference type="SMART" id="SM00369">
    <property type="entry name" value="LRR_TYP"/>
    <property type="match status" value="4"/>
</dbReference>
<dbReference type="SMART" id="SM00082">
    <property type="entry name" value="LRRCT"/>
    <property type="match status" value="1"/>
</dbReference>
<dbReference type="SMART" id="SM00013">
    <property type="entry name" value="LRRNT"/>
    <property type="match status" value="1"/>
</dbReference>
<dbReference type="SUPFAM" id="SSF49265">
    <property type="entry name" value="Fibronectin type III"/>
    <property type="match status" value="1"/>
</dbReference>
<dbReference type="SUPFAM" id="SSF48726">
    <property type="entry name" value="Immunoglobulin"/>
    <property type="match status" value="1"/>
</dbReference>
<dbReference type="SUPFAM" id="SSF52058">
    <property type="entry name" value="L domain-like"/>
    <property type="match status" value="1"/>
</dbReference>
<dbReference type="PROSITE" id="PS50853">
    <property type="entry name" value="FN3"/>
    <property type="match status" value="1"/>
</dbReference>
<dbReference type="PROSITE" id="PS50835">
    <property type="entry name" value="IG_LIKE"/>
    <property type="match status" value="1"/>
</dbReference>
<dbReference type="PROSITE" id="PS51450">
    <property type="entry name" value="LRR"/>
    <property type="match status" value="4"/>
</dbReference>
<accession>Q8K099</accession>
<accession>Q8BXN3</accession>
<proteinExistence type="evidence at protein level"/>
<sequence length="624" mass="68464">MWVALGMLWLLALGGPHQAWGFCPSECSCSLRILSDGSKARTVVCSDPDLTLPPASIPPDTCKLRLERTAIRRVPGETFRPLSRLEQLWLPYNALSELSALMLRGLRRLRELRLPGNRLVTFPWAALRDTPQLQLLDLQANRLSTLPPEAAHFLENLTFLDLSNNQLMRLPEELLDVWAHLKTGPFLSGHHARLILGLQDNPWVCDCRLYDLVHLLDGWVSSNLIFIEARLRCASPRSLAGVAFSQLELRKCQSPELRPGVTSIISPLGSTVLLRCGATGIPGPEMSWRRANGRPLNGTVHQEVSSDGSSWTLLDLPVVSLFDSGDYICQAKNFLGASETLISLIVTEPQTSTGYSGIPGVLWARTGEGAEAAAYNNKLVARHVPHMPEHVALATKPSMPSIKEELALQNFQMDVPGEFSREPSEHQEAQMVRSLKVVGDTYHSVSLVWKAPQAGNTTAFSVLYAVFGHRDMRRMTVEPGKTSVTIEGLAPKTKYVACVCVRGLVPTKEQCVIFSTDEVVDAEGTQRLINMVVISVAAIIALPPTLLVCCGALRRRCHKCRTGGSAEASGAYVNLERLGHSEDSSEVLSRSSLSEGDRLLSARSSLDSQVLGVRGGRRINEYFC</sequence>
<reference key="1">
    <citation type="journal article" date="2005" name="Science">
        <title>The transcriptional landscape of the mammalian genome.</title>
        <authorList>
            <person name="Carninci P."/>
            <person name="Kasukawa T."/>
            <person name="Katayama S."/>
            <person name="Gough J."/>
            <person name="Frith M.C."/>
            <person name="Maeda N."/>
            <person name="Oyama R."/>
            <person name="Ravasi T."/>
            <person name="Lenhard B."/>
            <person name="Wells C."/>
            <person name="Kodzius R."/>
            <person name="Shimokawa K."/>
            <person name="Bajic V.B."/>
            <person name="Brenner S.E."/>
            <person name="Batalov S."/>
            <person name="Forrest A.R."/>
            <person name="Zavolan M."/>
            <person name="Davis M.J."/>
            <person name="Wilming L.G."/>
            <person name="Aidinis V."/>
            <person name="Allen J.E."/>
            <person name="Ambesi-Impiombato A."/>
            <person name="Apweiler R."/>
            <person name="Aturaliya R.N."/>
            <person name="Bailey T.L."/>
            <person name="Bansal M."/>
            <person name="Baxter L."/>
            <person name="Beisel K.W."/>
            <person name="Bersano T."/>
            <person name="Bono H."/>
            <person name="Chalk A.M."/>
            <person name="Chiu K.P."/>
            <person name="Choudhary V."/>
            <person name="Christoffels A."/>
            <person name="Clutterbuck D.R."/>
            <person name="Crowe M.L."/>
            <person name="Dalla E."/>
            <person name="Dalrymple B.P."/>
            <person name="de Bono B."/>
            <person name="Della Gatta G."/>
            <person name="di Bernardo D."/>
            <person name="Down T."/>
            <person name="Engstrom P."/>
            <person name="Fagiolini M."/>
            <person name="Faulkner G."/>
            <person name="Fletcher C.F."/>
            <person name="Fukushima T."/>
            <person name="Furuno M."/>
            <person name="Futaki S."/>
            <person name="Gariboldi M."/>
            <person name="Georgii-Hemming P."/>
            <person name="Gingeras T.R."/>
            <person name="Gojobori T."/>
            <person name="Green R.E."/>
            <person name="Gustincich S."/>
            <person name="Harbers M."/>
            <person name="Hayashi Y."/>
            <person name="Hensch T.K."/>
            <person name="Hirokawa N."/>
            <person name="Hill D."/>
            <person name="Huminiecki L."/>
            <person name="Iacono M."/>
            <person name="Ikeo K."/>
            <person name="Iwama A."/>
            <person name="Ishikawa T."/>
            <person name="Jakt M."/>
            <person name="Kanapin A."/>
            <person name="Katoh M."/>
            <person name="Kawasawa Y."/>
            <person name="Kelso J."/>
            <person name="Kitamura H."/>
            <person name="Kitano H."/>
            <person name="Kollias G."/>
            <person name="Krishnan S.P."/>
            <person name="Kruger A."/>
            <person name="Kummerfeld S.K."/>
            <person name="Kurochkin I.V."/>
            <person name="Lareau L.F."/>
            <person name="Lazarevic D."/>
            <person name="Lipovich L."/>
            <person name="Liu J."/>
            <person name="Liuni S."/>
            <person name="McWilliam S."/>
            <person name="Madan Babu M."/>
            <person name="Madera M."/>
            <person name="Marchionni L."/>
            <person name="Matsuda H."/>
            <person name="Matsuzawa S."/>
            <person name="Miki H."/>
            <person name="Mignone F."/>
            <person name="Miyake S."/>
            <person name="Morris K."/>
            <person name="Mottagui-Tabar S."/>
            <person name="Mulder N."/>
            <person name="Nakano N."/>
            <person name="Nakauchi H."/>
            <person name="Ng P."/>
            <person name="Nilsson R."/>
            <person name="Nishiguchi S."/>
            <person name="Nishikawa S."/>
            <person name="Nori F."/>
            <person name="Ohara O."/>
            <person name="Okazaki Y."/>
            <person name="Orlando V."/>
            <person name="Pang K.C."/>
            <person name="Pavan W.J."/>
            <person name="Pavesi G."/>
            <person name="Pesole G."/>
            <person name="Petrovsky N."/>
            <person name="Piazza S."/>
            <person name="Reed J."/>
            <person name="Reid J.F."/>
            <person name="Ring B.Z."/>
            <person name="Ringwald M."/>
            <person name="Rost B."/>
            <person name="Ruan Y."/>
            <person name="Salzberg S.L."/>
            <person name="Sandelin A."/>
            <person name="Schneider C."/>
            <person name="Schoenbach C."/>
            <person name="Sekiguchi K."/>
            <person name="Semple C.A."/>
            <person name="Seno S."/>
            <person name="Sessa L."/>
            <person name="Sheng Y."/>
            <person name="Shibata Y."/>
            <person name="Shimada H."/>
            <person name="Shimada K."/>
            <person name="Silva D."/>
            <person name="Sinclair B."/>
            <person name="Sperling S."/>
            <person name="Stupka E."/>
            <person name="Sugiura K."/>
            <person name="Sultana R."/>
            <person name="Takenaka Y."/>
            <person name="Taki K."/>
            <person name="Tammoja K."/>
            <person name="Tan S.L."/>
            <person name="Tang S."/>
            <person name="Taylor M.S."/>
            <person name="Tegner J."/>
            <person name="Teichmann S.A."/>
            <person name="Ueda H.R."/>
            <person name="van Nimwegen E."/>
            <person name="Verardo R."/>
            <person name="Wei C.L."/>
            <person name="Yagi K."/>
            <person name="Yamanishi H."/>
            <person name="Zabarovsky E."/>
            <person name="Zhu S."/>
            <person name="Zimmer A."/>
            <person name="Hide W."/>
            <person name="Bult C."/>
            <person name="Grimmond S.M."/>
            <person name="Teasdale R.D."/>
            <person name="Liu E.T."/>
            <person name="Brusic V."/>
            <person name="Quackenbush J."/>
            <person name="Wahlestedt C."/>
            <person name="Mattick J.S."/>
            <person name="Hume D.A."/>
            <person name="Kai C."/>
            <person name="Sasaki D."/>
            <person name="Tomaru Y."/>
            <person name="Fukuda S."/>
            <person name="Kanamori-Katayama M."/>
            <person name="Suzuki M."/>
            <person name="Aoki J."/>
            <person name="Arakawa T."/>
            <person name="Iida J."/>
            <person name="Imamura K."/>
            <person name="Itoh M."/>
            <person name="Kato T."/>
            <person name="Kawaji H."/>
            <person name="Kawagashira N."/>
            <person name="Kawashima T."/>
            <person name="Kojima M."/>
            <person name="Kondo S."/>
            <person name="Konno H."/>
            <person name="Nakano K."/>
            <person name="Ninomiya N."/>
            <person name="Nishio T."/>
            <person name="Okada M."/>
            <person name="Plessy C."/>
            <person name="Shibata K."/>
            <person name="Shiraki T."/>
            <person name="Suzuki S."/>
            <person name="Tagami M."/>
            <person name="Waki K."/>
            <person name="Watahiki A."/>
            <person name="Okamura-Oho Y."/>
            <person name="Suzuki H."/>
            <person name="Kawai J."/>
            <person name="Hayashizaki Y."/>
        </authorList>
    </citation>
    <scope>NUCLEOTIDE SEQUENCE [LARGE SCALE MRNA]</scope>
    <source>
        <strain>C57BL/6J</strain>
        <tissue>Retina</tissue>
    </source>
</reference>
<reference evidence="6" key="2">
    <citation type="journal article" date="2004" name="Genome Res.">
        <title>The status, quality, and expansion of the NIH full-length cDNA project: the Mammalian Gene Collection (MGC).</title>
        <authorList>
            <consortium name="The MGC Project Team"/>
        </authorList>
    </citation>
    <scope>NUCLEOTIDE SEQUENCE [LARGE SCALE MRNA]</scope>
    <source>
        <strain>C57BL/6J</strain>
        <tissue>Retina</tissue>
    </source>
</reference>
<reference key="3">
    <citation type="journal article" date="2018" name="Cell Rep.">
        <title>Lrit1, a Retinal Transmembrane Protein, Regulates Selective Synapse Formation in Cone Photoreceptor Cells and Visual Acuity.</title>
        <authorList>
            <person name="Ueno A."/>
            <person name="Omori Y."/>
            <person name="Sugita Y."/>
            <person name="Watanabe S."/>
            <person name="Chaya T."/>
            <person name="Kozuka T."/>
            <person name="Kon T."/>
            <person name="Yoshida S."/>
            <person name="Matsushita K."/>
            <person name="Kuwahara R."/>
            <person name="Kajimura N."/>
            <person name="Okada Y."/>
            <person name="Furukawa T."/>
        </authorList>
    </citation>
    <scope>FUNCTION</scope>
    <scope>INTERACTION WITH LRIT2; GRM6 AND FRMPD2</scope>
    <scope>SUBCELLULAR LOCATION</scope>
    <scope>TISSUE SPECIFICITY</scope>
    <scope>DISRUPTION PHENOTYPE</scope>
</reference>
<keyword id="KW-0966">Cell projection</keyword>
<keyword id="KW-1015">Disulfide bond</keyword>
<keyword id="KW-0256">Endoplasmic reticulum</keyword>
<keyword id="KW-0325">Glycoprotein</keyword>
<keyword id="KW-0393">Immunoglobulin domain</keyword>
<keyword id="KW-0433">Leucine-rich repeat</keyword>
<keyword id="KW-0472">Membrane</keyword>
<keyword id="KW-1185">Reference proteome</keyword>
<keyword id="KW-0677">Repeat</keyword>
<keyword id="KW-0716">Sensory transduction</keyword>
<keyword id="KW-0732">Signal</keyword>
<keyword id="KW-0812">Transmembrane</keyword>
<keyword id="KW-1133">Transmembrane helix</keyword>
<keyword id="KW-0844">Vision</keyword>
<name>LRIT1_MOUSE</name>
<gene>
    <name type="primary">Lrit1</name>
    <name type="synonym">Lrrc21</name>
    <name type="synonym">Pal</name>
</gene>
<comment type="function">
    <text evidence="5">Photoreceptor synaptic protein essential for normal vision (PubMed:29590622). Involved in synapse formation in cone photoreceptor cells (PubMed:29590622).</text>
</comment>
<comment type="subunit">
    <text evidence="5">May form a homodimer (PubMed:29590622). Interacts with LRIT2; may form a heterodimer with LRIT2 (PubMed:29590622). Interacts (via its N-terminal extracellular domain) with metabotropic glutamate receptor GRM6 (PubMed:29590622). Interacts (via its extreme C-terminus) with the scaffold protein FRMPD2 (via the third PDZ domain); the interaction leads to their colocalization in photoreceptor synapses (PubMed:29590622).</text>
</comment>
<comment type="subcellular location">
    <subcellularLocation>
        <location evidence="1">Endoplasmic reticulum membrane</location>
        <topology evidence="1">Single-pass type I membrane protein</topology>
    </subcellularLocation>
    <subcellularLocation>
        <location evidence="5">Cell projection</location>
        <location evidence="5">Dendrite</location>
    </subcellularLocation>
</comment>
<comment type="tissue specificity">
    <text evidence="5">Expressed predominantly in developing photoreceptor and bipolar cells.</text>
</comment>
<comment type="disruption phenotype">
    <text evidence="5">Mutant mice exhibit impaired visual acuity in optokinetic responses (PubMed:29590622). They exhibit impaired synapse transmission from cone photoreceptors to cone ON-bipolar cells, likely caused by improper formation of cone synaptic terminal structures (PubMed:29590622).</text>
</comment>
<comment type="sequence caution" evidence="6">
    <conflict type="erroneous initiation">
        <sequence resource="EMBL-CDS" id="BAC32010"/>
    </conflict>
</comment>
<feature type="signal peptide" evidence="2">
    <location>
        <begin position="1"/>
        <end position="21"/>
    </location>
</feature>
<feature type="chain" id="PRO_0000014836" description="Leucine-rich repeat, immunoglobulin-like domain and transmembrane domain-containing protein 1">
    <location>
        <begin position="22"/>
        <end position="624"/>
    </location>
</feature>
<feature type="topological domain" description="Lumenal" evidence="2">
    <location>
        <begin position="22"/>
        <end position="527"/>
    </location>
</feature>
<feature type="transmembrane region" description="Helical" evidence="2">
    <location>
        <begin position="528"/>
        <end position="548"/>
    </location>
</feature>
<feature type="topological domain" description="Cytoplasmic" evidence="2">
    <location>
        <begin position="549"/>
        <end position="624"/>
    </location>
</feature>
<feature type="domain" description="LRRNT">
    <location>
        <begin position="22"/>
        <end position="59"/>
    </location>
</feature>
<feature type="repeat" description="LRR 1">
    <location>
        <begin position="60"/>
        <end position="81"/>
    </location>
</feature>
<feature type="repeat" description="LRR 2">
    <location>
        <begin position="84"/>
        <end position="105"/>
    </location>
</feature>
<feature type="repeat" description="LRR 3">
    <location>
        <begin position="108"/>
        <end position="129"/>
    </location>
</feature>
<feature type="repeat" description="LRR 4">
    <location>
        <begin position="132"/>
        <end position="153"/>
    </location>
</feature>
<feature type="repeat" description="LRR 5">
    <location>
        <begin position="156"/>
        <end position="177"/>
    </location>
</feature>
<feature type="domain" description="LRRCT">
    <location>
        <begin position="201"/>
        <end position="254"/>
    </location>
</feature>
<feature type="domain" description="Ig-like C2-type">
    <location>
        <begin position="267"/>
        <end position="336"/>
    </location>
</feature>
<feature type="domain" description="Fibronectin type-III" evidence="4">
    <location>
        <begin position="431"/>
        <end position="519"/>
    </location>
</feature>
<feature type="repeat" description="LRR 6">
    <location>
        <begin position="526"/>
        <end position="549"/>
    </location>
</feature>
<feature type="glycosylation site" description="N-linked (GlcNAc...) asparagine" evidence="2">
    <location>
        <position position="156"/>
    </location>
</feature>
<feature type="glycosylation site" description="N-linked (GlcNAc...) asparagine" evidence="2">
    <location>
        <position position="297"/>
    </location>
</feature>
<feature type="glycosylation site" description="N-linked (GlcNAc...) asparagine" evidence="2">
    <location>
        <position position="456"/>
    </location>
</feature>
<feature type="disulfide bond" evidence="3">
    <location>
        <begin position="276"/>
        <end position="329"/>
    </location>
</feature>
<feature type="sequence conflict" description="In Ref. 1; BAC32010." evidence="6" ref="1">
    <original>R</original>
    <variation>C</variation>
    <location>
        <position position="65"/>
    </location>
</feature>
<organism>
    <name type="scientific">Mus musculus</name>
    <name type="common">Mouse</name>
    <dbReference type="NCBI Taxonomy" id="10090"/>
    <lineage>
        <taxon>Eukaryota</taxon>
        <taxon>Metazoa</taxon>
        <taxon>Chordata</taxon>
        <taxon>Craniata</taxon>
        <taxon>Vertebrata</taxon>
        <taxon>Euteleostomi</taxon>
        <taxon>Mammalia</taxon>
        <taxon>Eutheria</taxon>
        <taxon>Euarchontoglires</taxon>
        <taxon>Glires</taxon>
        <taxon>Rodentia</taxon>
        <taxon>Myomorpha</taxon>
        <taxon>Muroidea</taxon>
        <taxon>Muridae</taxon>
        <taxon>Murinae</taxon>
        <taxon>Mus</taxon>
        <taxon>Mus</taxon>
    </lineage>
</organism>